<proteinExistence type="evidence at protein level"/>
<protein>
    <recommendedName>
        <fullName evidence="7">Lanthanide-dependent methanol dehydrogenase</fullName>
        <shortName evidence="7">Lanthanide-dependent MDH</shortName>
        <shortName evidence="7">Ln(3+)-dependent MDH</shortName>
        <shortName evidence="4">Ln-MDH</shortName>
        <ecNumber evidence="7">1.1.2.10</ecNumber>
    </recommendedName>
</protein>
<dbReference type="EC" id="1.1.2.10" evidence="7"/>
<dbReference type="EMBL" id="CAHT01000021">
    <property type="protein sequence ID" value="CCG91656.1"/>
    <property type="molecule type" value="Genomic_DNA"/>
</dbReference>
<dbReference type="RefSeq" id="WP_009058797.1">
    <property type="nucleotide sequence ID" value="NZ_CAHT01000021.1"/>
</dbReference>
<dbReference type="PDB" id="4MAE">
    <property type="method" value="X-ray"/>
    <property type="resolution" value="1.60 A"/>
    <property type="chains" value="A/B=35-611"/>
</dbReference>
<dbReference type="PDB" id="6FKW">
    <property type="method" value="X-ray"/>
    <property type="resolution" value="1.40 A"/>
    <property type="chains" value="A/B/C/D=35-611"/>
</dbReference>
<dbReference type="PDBsum" id="4MAE"/>
<dbReference type="PDBsum" id="6FKW"/>
<dbReference type="SMR" id="I0JWN7"/>
<dbReference type="FunCoup" id="I0JWN7">
    <property type="interactions" value="34"/>
</dbReference>
<dbReference type="STRING" id="1156937.GCA_000953475_01499"/>
<dbReference type="eggNOG" id="COG4993">
    <property type="taxonomic scope" value="Bacteria"/>
</dbReference>
<dbReference type="InParanoid" id="I0JWN7"/>
<dbReference type="OrthoDB" id="9794322at2"/>
<dbReference type="SABIO-RK" id="I0JWN7"/>
<dbReference type="UniPathway" id="UPA00928"/>
<dbReference type="Proteomes" id="UP000004837">
    <property type="component" value="Unassembled WGS sequence"/>
</dbReference>
<dbReference type="GO" id="GO:0016020">
    <property type="term" value="C:membrane"/>
    <property type="evidence" value="ECO:0007669"/>
    <property type="project" value="InterPro"/>
</dbReference>
<dbReference type="GO" id="GO:0042597">
    <property type="term" value="C:periplasmic space"/>
    <property type="evidence" value="ECO:0007669"/>
    <property type="project" value="UniProtKB-SubCell"/>
</dbReference>
<dbReference type="GO" id="GO:0052933">
    <property type="term" value="F:alcohol dehydrogenase (cytochrome c(L)) activity"/>
    <property type="evidence" value="ECO:0007669"/>
    <property type="project" value="UniProtKB-EC"/>
</dbReference>
<dbReference type="GO" id="GO:0052934">
    <property type="term" value="F:alcohol dehydrogenase (cytochrome c) activity"/>
    <property type="evidence" value="ECO:0007669"/>
    <property type="project" value="UniProtKB-EC"/>
</dbReference>
<dbReference type="GO" id="GO:0005509">
    <property type="term" value="F:calcium ion binding"/>
    <property type="evidence" value="ECO:0007669"/>
    <property type="project" value="InterPro"/>
</dbReference>
<dbReference type="GO" id="GO:0015945">
    <property type="term" value="P:methanol metabolic process"/>
    <property type="evidence" value="ECO:0007669"/>
    <property type="project" value="UniProtKB-KW"/>
</dbReference>
<dbReference type="CDD" id="cd10278">
    <property type="entry name" value="PQQ_MDH"/>
    <property type="match status" value="1"/>
</dbReference>
<dbReference type="Gene3D" id="2.140.10.10">
    <property type="entry name" value="Quinoprotein alcohol dehydrogenase-like superfamily"/>
    <property type="match status" value="1"/>
</dbReference>
<dbReference type="InterPro" id="IPR018391">
    <property type="entry name" value="PQQ_b-propeller_rpt"/>
</dbReference>
<dbReference type="InterPro" id="IPR017512">
    <property type="entry name" value="PQQ_MeOH/EtOH_DH"/>
</dbReference>
<dbReference type="InterPro" id="IPR002372">
    <property type="entry name" value="PQQ_rpt_dom"/>
</dbReference>
<dbReference type="InterPro" id="IPR011047">
    <property type="entry name" value="Quinoprotein_ADH-like_sf"/>
</dbReference>
<dbReference type="NCBIfam" id="TIGR03075">
    <property type="entry name" value="PQQ_enz_alc_DH"/>
    <property type="match status" value="1"/>
</dbReference>
<dbReference type="PANTHER" id="PTHR32303">
    <property type="entry name" value="QUINOPROTEIN ALCOHOL DEHYDROGENASE (CYTOCHROME C)"/>
    <property type="match status" value="1"/>
</dbReference>
<dbReference type="PANTHER" id="PTHR32303:SF4">
    <property type="entry name" value="QUINOPROTEIN GLUCOSE DEHYDROGENASE"/>
    <property type="match status" value="1"/>
</dbReference>
<dbReference type="Pfam" id="PF01011">
    <property type="entry name" value="PQQ"/>
    <property type="match status" value="2"/>
</dbReference>
<dbReference type="SMART" id="SM00564">
    <property type="entry name" value="PQQ"/>
    <property type="match status" value="5"/>
</dbReference>
<dbReference type="SUPFAM" id="SSF50998">
    <property type="entry name" value="Quinoprotein alcohol dehydrogenase-like"/>
    <property type="match status" value="1"/>
</dbReference>
<organism evidence="9 10">
    <name type="scientific">Methylacidiphilum fumariolicum (strain SolV)</name>
    <dbReference type="NCBI Taxonomy" id="1156937"/>
    <lineage>
        <taxon>Bacteria</taxon>
        <taxon>Pseudomonadati</taxon>
        <taxon>Verrucomicrobiota</taxon>
        <taxon>Methylacidiphilae</taxon>
        <taxon>Methylacidiphilales</taxon>
        <taxon>Methylacidiphilaceae</taxon>
        <taxon>Methylacidiphilum (ex Ratnadevi et al. 2023)</taxon>
    </lineage>
</organism>
<accession>I0JWN7</accession>
<comment type="function">
    <text evidence="1 2">Catalyzes the oxidation of methanol to formaldehyde or formate in the presence of lanthanides (Ln). Is a key enzyme in methane/methanol metabolism, allowing M.fumariolicum to grow on methane as the sole carbon and energy source. Can also act on other primary alcohols in vitro, such as ethanol, 1-propanol, 1-butanol, and 1-hexanol, but is not able to oxidize secondary alcohols and acetaldehyde (PubMed:24034209). Uses a specific cytochrome cL, encoded by the adjacent gene in the locus, as electron acceptor (By similarity).</text>
</comment>
<comment type="catalytic activity">
    <reaction evidence="7 8">
        <text>2 Fe(III)-[cytochrome cL] + methanol = 2 Fe(II)-[cytochrome cL] + formaldehyde + 2 H(+)</text>
        <dbReference type="Rhea" id="RHEA:51008"/>
        <dbReference type="Rhea" id="RHEA-COMP:12863"/>
        <dbReference type="Rhea" id="RHEA-COMP:12864"/>
        <dbReference type="ChEBI" id="CHEBI:15378"/>
        <dbReference type="ChEBI" id="CHEBI:16842"/>
        <dbReference type="ChEBI" id="CHEBI:17790"/>
        <dbReference type="ChEBI" id="CHEBI:29033"/>
        <dbReference type="ChEBI" id="CHEBI:29034"/>
        <dbReference type="EC" id="1.1.2.10"/>
    </reaction>
    <physiologicalReaction direction="left-to-right" evidence="7 8">
        <dbReference type="Rhea" id="RHEA:51009"/>
    </physiologicalReaction>
</comment>
<comment type="catalytic activity">
    <reaction evidence="7">
        <text>4 Fe(III)-[cytochrome cL] + methanol + H2O = 4 Fe(II)-[cytochrome cL] + formate + 5 H(+)</text>
        <dbReference type="Rhea" id="RHEA:56272"/>
        <dbReference type="Rhea" id="RHEA-COMP:12863"/>
        <dbReference type="Rhea" id="RHEA-COMP:12864"/>
        <dbReference type="ChEBI" id="CHEBI:15377"/>
        <dbReference type="ChEBI" id="CHEBI:15378"/>
        <dbReference type="ChEBI" id="CHEBI:15740"/>
        <dbReference type="ChEBI" id="CHEBI:17790"/>
        <dbReference type="ChEBI" id="CHEBI:29033"/>
        <dbReference type="ChEBI" id="CHEBI:29034"/>
    </reaction>
    <physiologicalReaction direction="left-to-right" evidence="7">
        <dbReference type="Rhea" id="RHEA:56273"/>
    </physiologicalReaction>
</comment>
<comment type="catalytic activity">
    <reaction evidence="7 8">
        <text>2 Fe(III)-[cytochrome cL] + a primary alcohol = 2 Fe(II)-[cytochrome cL] + an aldehyde + 2 H(+)</text>
        <dbReference type="Rhea" id="RHEA:51004"/>
        <dbReference type="Rhea" id="RHEA-COMP:12863"/>
        <dbReference type="Rhea" id="RHEA-COMP:12864"/>
        <dbReference type="ChEBI" id="CHEBI:15378"/>
        <dbReference type="ChEBI" id="CHEBI:15734"/>
        <dbReference type="ChEBI" id="CHEBI:17478"/>
        <dbReference type="ChEBI" id="CHEBI:29033"/>
        <dbReference type="ChEBI" id="CHEBI:29034"/>
    </reaction>
    <physiologicalReaction direction="left-to-right" evidence="7 8">
        <dbReference type="Rhea" id="RHEA:51005"/>
    </physiologicalReaction>
</comment>
<comment type="cofactor">
    <cofactor evidence="7">
        <name>Ce(3+)</name>
        <dbReference type="ChEBI" id="CHEBI:48782"/>
    </cofactor>
    <cofactor evidence="3 7">
        <name>La(3+)</name>
        <dbReference type="ChEBI" id="CHEBI:49701"/>
    </cofactor>
    <cofactor evidence="7">
        <name>Nd(3+)</name>
        <dbReference type="ChEBI" id="CHEBI:229785"/>
    </cofactor>
    <cofactor evidence="3 7">
        <name>Pr(3+)</name>
        <dbReference type="ChEBI" id="CHEBI:229784"/>
    </cofactor>
    <cofactor evidence="3">
        <name>Eu(3+)</name>
        <dbReference type="ChEBI" id="CHEBI:49591"/>
    </cofactor>
    <text evidence="2 3">Appears to be able to bind and use several lanthanides. Binds one lanthanide ion per subunit.</text>
</comment>
<comment type="cofactor">
    <cofactor evidence="2 3">
        <name>pyrroloquinoline quinone</name>
        <dbReference type="ChEBI" id="CHEBI:58442"/>
    </cofactor>
    <text evidence="2 3">Binds 1 PQQ group per subunit.</text>
</comment>
<comment type="biophysicochemical properties">
    <kinetics>
        <KM evidence="2">0.8 uM for methanol (in the presence of a mixture of La(3+), Ce(3+) and Pr(3+))</KM>
        <KM evidence="2">3 uM for ethanol (in the presence of a mixture of La(3+), Ce(3+) and Pr(3+))</KM>
        <KM evidence="2">7 uM for 1-propanol (in the presence of a mixture of La(3+), Ce(3+) and Pr(3+))</KM>
        <KM evidence="2">6 uM for 1-butanol (in the presence of a mixture of La(3+), Ce(3+) and Pr(3+))</KM>
        <KM evidence="2">2 uM for 1-hexanol (in the presence of a mixture of La(3+), Ce(3+) and Pr(3+))</KM>
        <KM evidence="2">7 uM for formaldehyde (in the presence of a mixture of La(3+), Ce(3+) and Pr(3+))</KM>
        <KM evidence="3">3.62 uM for methanol (in the presence of Eu(3+))</KM>
        <Vmax evidence="3">189.0 nmol/min/mg enzyme for the Eu(3+)-dependent oxidation of methanol using artificial electron acceptor</Vmax>
        <text evidence="3">kcat is 0.20 sec(-1) for the Eu(3+)-dependent oxidation of methanol using artificial electron acceptor.</text>
    </kinetics>
    <phDependence>
        <text evidence="2">Optimum pH is around 7.</text>
    </phDependence>
    <temperatureDependence>
        <text evidence="2">Optimum temperature is 60 degrees Celsius.</text>
    </temperatureDependence>
</comment>
<comment type="pathway">
    <text evidence="7">One-carbon metabolism; methanol degradation.</text>
</comment>
<comment type="subunit">
    <text evidence="2">Homodimer.</text>
</comment>
<comment type="subcellular location">
    <subcellularLocation>
        <location evidence="6">Periplasm</location>
    </subcellularLocation>
</comment>
<comment type="mass spectrometry" mass="63502.0" error="176.0" method="MALDI" evidence="2">
    <text>The measured range is 35-611.</text>
</comment>
<comment type="miscellaneous">
    <text evidence="2">Growth of M.fumariolicum SolV, an extremely acidophilic methanotrophic microbe isolated from an Italian volcanic mudpot, was shown to be strictly dependent on the presence of lanthanides, a group of rare earth elements (REEs) such as lanthanum (La), cerium (Ce), praseodymium (Pr) and neodymium (Nd).</text>
</comment>
<comment type="similarity">
    <text evidence="2">Belongs to the bacterial PQQ dehydrogenase family.</text>
</comment>
<feature type="signal peptide" evidence="7">
    <location>
        <begin position="1"/>
        <end position="34"/>
    </location>
</feature>
<feature type="chain" id="PRO_5003629701" description="Lanthanide-dependent methanol dehydrogenase">
    <location>
        <begin position="35"/>
        <end position="611"/>
    </location>
</feature>
<feature type="binding site" evidence="2 3 11 12">
    <location>
        <position position="144"/>
    </location>
    <ligand>
        <name>pyrroloquinoline quinone</name>
        <dbReference type="ChEBI" id="CHEBI:58442"/>
    </ligand>
</feature>
<feature type="binding site" evidence="2 3 11 12">
    <location>
        <position position="188"/>
    </location>
    <ligand>
        <name>pyrroloquinoline quinone</name>
        <dbReference type="ChEBI" id="CHEBI:58442"/>
    </ligand>
</feature>
<feature type="binding site" evidence="2 3 11 12">
    <location>
        <position position="203"/>
    </location>
    <ligand>
        <name>pyrroloquinoline quinone</name>
        <dbReference type="ChEBI" id="CHEBI:58442"/>
    </ligand>
</feature>
<feature type="binding site" evidence="2 3 11 12">
    <location>
        <position position="204"/>
    </location>
    <ligand>
        <name>pyrroloquinoline quinone</name>
        <dbReference type="ChEBI" id="CHEBI:58442"/>
    </ligand>
</feature>
<feature type="binding site" evidence="2 3 11 12">
    <location>
        <position position="205"/>
    </location>
    <ligand>
        <name>pyrroloquinoline quinone</name>
        <dbReference type="ChEBI" id="CHEBI:58442"/>
    </ligand>
</feature>
<feature type="binding site" evidence="2 11">
    <location>
        <position position="206"/>
    </location>
    <ligand>
        <name>Ce(3+)</name>
        <dbReference type="ChEBI" id="CHEBI:48782"/>
    </ligand>
</feature>
<feature type="binding site" evidence="3 12">
    <location>
        <position position="206"/>
    </location>
    <ligand>
        <name>Eu(3+)</name>
        <dbReference type="ChEBI" id="CHEBI:49591"/>
    </ligand>
</feature>
<feature type="binding site" evidence="2 3 11 12">
    <location>
        <position position="270"/>
    </location>
    <ligand>
        <name>pyrroloquinoline quinone</name>
        <dbReference type="ChEBI" id="CHEBI:58442"/>
    </ligand>
</feature>
<feature type="binding site" evidence="2 3 11 12">
    <location>
        <position position="272"/>
    </location>
    <ligand>
        <name>pyrroloquinoline quinone</name>
        <dbReference type="ChEBI" id="CHEBI:58442"/>
    </ligand>
</feature>
<feature type="binding site" evidence="2 11">
    <location>
        <position position="290"/>
    </location>
    <ligand>
        <name>Ce(3+)</name>
        <dbReference type="ChEBI" id="CHEBI:48782"/>
    </ligand>
</feature>
<feature type="binding site" evidence="3 12">
    <location>
        <position position="290"/>
    </location>
    <ligand>
        <name>Eu(3+)</name>
        <dbReference type="ChEBI" id="CHEBI:49591"/>
    </ligand>
</feature>
<feature type="binding site" evidence="2 11">
    <location>
        <position position="333"/>
    </location>
    <ligand>
        <name>Ce(3+)</name>
        <dbReference type="ChEBI" id="CHEBI:48782"/>
    </ligand>
</feature>
<feature type="binding site" evidence="3 12">
    <location>
        <position position="333"/>
    </location>
    <ligand>
        <name>Eu(3+)</name>
        <dbReference type="ChEBI" id="CHEBI:49591"/>
    </ligand>
</feature>
<feature type="binding site" evidence="2 11">
    <location>
        <position position="335"/>
    </location>
    <ligand>
        <name>Ce(3+)</name>
        <dbReference type="ChEBI" id="CHEBI:48782"/>
    </ligand>
</feature>
<feature type="binding site" evidence="3 12">
    <location>
        <position position="335"/>
    </location>
    <ligand>
        <name>Eu(3+)</name>
        <dbReference type="ChEBI" id="CHEBI:49591"/>
    </ligand>
</feature>
<feature type="binding site" evidence="2 3 11 12">
    <location>
        <position position="360"/>
    </location>
    <ligand>
        <name>pyrroloquinoline quinone</name>
        <dbReference type="ChEBI" id="CHEBI:58442"/>
    </ligand>
</feature>
<feature type="binding site" evidence="2 3 11 12">
    <location>
        <position position="501"/>
    </location>
    <ligand>
        <name>pyrroloquinoline quinone</name>
        <dbReference type="ChEBI" id="CHEBI:58442"/>
    </ligand>
</feature>
<feature type="binding site" evidence="2 3 11 12">
    <location>
        <position position="566"/>
    </location>
    <ligand>
        <name>pyrroloquinoline quinone</name>
        <dbReference type="ChEBI" id="CHEBI:58442"/>
    </ligand>
</feature>
<feature type="disulfide bond" evidence="2 3 11 12">
    <location>
        <begin position="138"/>
        <end position="139"/>
    </location>
</feature>
<feature type="disulfide bond" evidence="2 3 11 12">
    <location>
        <begin position="414"/>
        <end position="443"/>
    </location>
</feature>
<feature type="helix" evidence="13">
    <location>
        <begin position="36"/>
        <end position="41"/>
    </location>
</feature>
<feature type="turn" evidence="13">
    <location>
        <begin position="68"/>
        <end position="70"/>
    </location>
</feature>
<feature type="helix" evidence="13">
    <location>
        <begin position="71"/>
        <end position="73"/>
    </location>
</feature>
<feature type="strand" evidence="13">
    <location>
        <begin position="75"/>
        <end position="81"/>
    </location>
</feature>
<feature type="strand" evidence="13">
    <location>
        <begin position="93"/>
        <end position="95"/>
    </location>
</feature>
<feature type="strand" evidence="13">
    <location>
        <begin position="98"/>
        <end position="102"/>
    </location>
</feature>
<feature type="turn" evidence="13">
    <location>
        <begin position="105"/>
        <end position="107"/>
    </location>
</feature>
<feature type="strand" evidence="13">
    <location>
        <begin position="109"/>
        <end position="113"/>
    </location>
</feature>
<feature type="strand" evidence="13">
    <location>
        <begin position="120"/>
        <end position="125"/>
    </location>
</feature>
<feature type="helix" evidence="13">
    <location>
        <begin position="131"/>
        <end position="136"/>
    </location>
</feature>
<feature type="strand" evidence="13">
    <location>
        <begin position="147"/>
        <end position="149"/>
    </location>
</feature>
<feature type="strand" evidence="13">
    <location>
        <begin position="152"/>
        <end position="156"/>
    </location>
</feature>
<feature type="strand" evidence="13">
    <location>
        <begin position="160"/>
        <end position="166"/>
    </location>
</feature>
<feature type="turn" evidence="13">
    <location>
        <begin position="167"/>
        <end position="169"/>
    </location>
</feature>
<feature type="strand" evidence="13">
    <location>
        <begin position="172"/>
        <end position="177"/>
    </location>
</feature>
<feature type="helix" evidence="13">
    <location>
        <begin position="181"/>
        <end position="183"/>
    </location>
</feature>
<feature type="strand" evidence="13">
    <location>
        <begin position="192"/>
        <end position="194"/>
    </location>
</feature>
<feature type="strand" evidence="13">
    <location>
        <begin position="197"/>
        <end position="200"/>
    </location>
</feature>
<feature type="turn" evidence="13">
    <location>
        <begin position="205"/>
        <end position="208"/>
    </location>
</feature>
<feature type="strand" evidence="13">
    <location>
        <begin position="212"/>
        <end position="217"/>
    </location>
</feature>
<feature type="turn" evidence="13">
    <location>
        <begin position="218"/>
        <end position="220"/>
    </location>
</feature>
<feature type="strand" evidence="13">
    <location>
        <begin position="223"/>
        <end position="232"/>
    </location>
</feature>
<feature type="helix" evidence="13">
    <location>
        <begin position="233"/>
        <end position="236"/>
    </location>
</feature>
<feature type="turn" evidence="13">
    <location>
        <begin position="240"/>
        <end position="245"/>
    </location>
</feature>
<feature type="helix" evidence="13">
    <location>
        <begin position="247"/>
        <end position="249"/>
    </location>
</feature>
<feature type="helix" evidence="13">
    <location>
        <begin position="254"/>
        <end position="257"/>
    </location>
</feature>
<feature type="helix" evidence="13">
    <location>
        <begin position="263"/>
        <end position="266"/>
    </location>
</feature>
<feature type="strand" evidence="13">
    <location>
        <begin position="276"/>
        <end position="278"/>
    </location>
</feature>
<feature type="turn" evidence="13">
    <location>
        <begin position="279"/>
        <end position="282"/>
    </location>
</feature>
<feature type="strand" evidence="13">
    <location>
        <begin position="283"/>
        <end position="287"/>
    </location>
</feature>
<feature type="helix" evidence="13">
    <location>
        <begin position="296"/>
        <end position="299"/>
    </location>
</feature>
<feature type="turn" evidence="13">
    <location>
        <begin position="305"/>
        <end position="308"/>
    </location>
</feature>
<feature type="strand" evidence="13">
    <location>
        <begin position="309"/>
        <end position="313"/>
    </location>
</feature>
<feature type="turn" evidence="13">
    <location>
        <begin position="315"/>
        <end position="317"/>
    </location>
</feature>
<feature type="strand" evidence="13">
    <location>
        <begin position="320"/>
        <end position="327"/>
    </location>
</feature>
<feature type="strand" evidence="13">
    <location>
        <begin position="344"/>
        <end position="347"/>
    </location>
</feature>
<feature type="strand" evidence="13">
    <location>
        <begin position="350"/>
        <end position="358"/>
    </location>
</feature>
<feature type="strand" evidence="13">
    <location>
        <begin position="362"/>
        <end position="368"/>
    </location>
</feature>
<feature type="turn" evidence="13">
    <location>
        <begin position="369"/>
        <end position="371"/>
    </location>
</feature>
<feature type="strand" evidence="13">
    <location>
        <begin position="374"/>
        <end position="381"/>
    </location>
</feature>
<feature type="strand" evidence="13">
    <location>
        <begin position="385"/>
        <end position="389"/>
    </location>
</feature>
<feature type="turn" evidence="13">
    <location>
        <begin position="391"/>
        <end position="393"/>
    </location>
</feature>
<feature type="strand" evidence="13">
    <location>
        <begin position="396"/>
        <end position="398"/>
    </location>
</feature>
<feature type="helix" evidence="13">
    <location>
        <begin position="400"/>
        <end position="402"/>
    </location>
</feature>
<feature type="strand" evidence="13">
    <location>
        <begin position="408"/>
        <end position="415"/>
    </location>
</feature>
<feature type="strand" evidence="13">
    <location>
        <begin position="427"/>
        <end position="429"/>
    </location>
</feature>
<feature type="turn" evidence="13">
    <location>
        <begin position="430"/>
        <end position="433"/>
    </location>
</feature>
<feature type="strand" evidence="13">
    <location>
        <begin position="434"/>
        <end position="440"/>
    </location>
</feature>
<feature type="strand" evidence="13">
    <location>
        <begin position="442"/>
        <end position="448"/>
    </location>
</feature>
<feature type="strand" evidence="13">
    <location>
        <begin position="462"/>
        <end position="468"/>
    </location>
</feature>
<feature type="helix" evidence="13">
    <location>
        <begin position="469"/>
        <end position="472"/>
    </location>
</feature>
<feature type="strand" evidence="13">
    <location>
        <begin position="478"/>
        <end position="484"/>
    </location>
</feature>
<feature type="turn" evidence="13">
    <location>
        <begin position="485"/>
        <end position="488"/>
    </location>
</feature>
<feature type="strand" evidence="13">
    <location>
        <begin position="489"/>
        <end position="498"/>
    </location>
</feature>
<feature type="strand" evidence="13">
    <location>
        <begin position="505"/>
        <end position="507"/>
    </location>
</feature>
<feature type="strand" evidence="13">
    <location>
        <begin position="510"/>
        <end position="515"/>
    </location>
</feature>
<feature type="strand" evidence="13">
    <location>
        <begin position="519"/>
        <end position="525"/>
    </location>
</feature>
<feature type="turn" evidence="13">
    <location>
        <begin position="526"/>
        <end position="528"/>
    </location>
</feature>
<feature type="strand" evidence="13">
    <location>
        <begin position="531"/>
        <end position="536"/>
    </location>
</feature>
<feature type="strand" evidence="13">
    <location>
        <begin position="546"/>
        <end position="549"/>
    </location>
</feature>
<feature type="strand" evidence="13">
    <location>
        <begin position="555"/>
        <end position="561"/>
    </location>
</feature>
<feature type="turn" evidence="13">
    <location>
        <begin position="565"/>
        <end position="568"/>
    </location>
</feature>
<feature type="helix" evidence="13">
    <location>
        <begin position="569"/>
        <end position="572"/>
    </location>
</feature>
<feature type="turn" evidence="13">
    <location>
        <begin position="580"/>
        <end position="582"/>
    </location>
</feature>
<feature type="helix" evidence="13">
    <location>
        <begin position="583"/>
        <end position="585"/>
    </location>
</feature>
<feature type="helix" evidence="13">
    <location>
        <begin position="586"/>
        <end position="593"/>
    </location>
</feature>
<feature type="helix" evidence="13">
    <location>
        <begin position="595"/>
        <end position="598"/>
    </location>
</feature>
<feature type="strand" evidence="13">
    <location>
        <begin position="604"/>
        <end position="609"/>
    </location>
</feature>
<keyword id="KW-0002">3D-structure</keyword>
<keyword id="KW-1015">Disulfide bond</keyword>
<keyword id="KW-0479">Metal-binding</keyword>
<keyword id="KW-0485">Methanol utilization</keyword>
<keyword id="KW-0560">Oxidoreductase</keyword>
<keyword id="KW-0574">Periplasm</keyword>
<keyword id="KW-0732">Signal</keyword>
<name>XOXF_METFB</name>
<sequence length="611" mass="67114">MTVKLKKPKKYAVAKNATLLAAFGLIGSLSLAKANDELIKLEKEPGQWVMQNKNYANTRYSELNQINTKNVSRLRLAWSFSTGALRGHEGGPLVVGTTMYVHSAYPNHVYALDLTQKPYAIKWQYTPVQNSQAVAVACCDVVNRGLAYANGKIFMTTLDGQIIALDANTGKELWKMKHADVTKGETITGAPLVVKDKVLVGVSGGEFGVRGRVGAYDINTGNRVWLAYSQGPDEEVLLDSDFNKEFPQHGGPGDGTKTWPGEQWKLGGGTTWGWYSYDPALDLFYYGTSNPGTWNAEQRKGGDNKWSCTIFARRPDTGKARWAYQMTPWDSWDYDGVNEMILPDLTVKGKKTPCLVHFDRNGFGYVLDRRTGQLIEAQPFVYVNWAKEISKENDRPVEIPEKRTKQGVDTKGICPNSMGGKDQQPAAFSPQTGLFYVPTNNMCMNYEGVEATYTAGAPYVGANVLMYSGHEGKDDYYGAFICYDALKGKRVWEIHEHFPVWSGPVVTAGGLAFYGTMDGWFKAVDIKTGKVLWQQKLGSGIIGNPITFLGPDKKQYVAVYSGVGGWFGIAVAQNLPPDDPYAGLGAVGVAYQAGLPKATTVGGELYVFALE</sequence>
<evidence type="ECO:0000250" key="1">
    <source>
        <dbReference type="UniProtKB" id="C5B120"/>
    </source>
</evidence>
<evidence type="ECO:0000269" key="2">
    <source>
    </source>
</evidence>
<evidence type="ECO:0000269" key="3">
    <source>
    </source>
</evidence>
<evidence type="ECO:0000303" key="4">
    <source>
    </source>
</evidence>
<evidence type="ECO:0000303" key="5">
    <source>
    </source>
</evidence>
<evidence type="ECO:0000305" key="6"/>
<evidence type="ECO:0000305" key="7">
    <source>
    </source>
</evidence>
<evidence type="ECO:0000305" key="8">
    <source>
    </source>
</evidence>
<evidence type="ECO:0000312" key="9">
    <source>
        <dbReference type="EMBL" id="CCG91656.1"/>
    </source>
</evidence>
<evidence type="ECO:0000312" key="10">
    <source>
        <dbReference type="Proteomes" id="UP000004837"/>
    </source>
</evidence>
<evidence type="ECO:0007744" key="11">
    <source>
        <dbReference type="PDB" id="4MAE"/>
    </source>
</evidence>
<evidence type="ECO:0007744" key="12">
    <source>
        <dbReference type="PDB" id="6FKW"/>
    </source>
</evidence>
<evidence type="ECO:0007829" key="13">
    <source>
        <dbReference type="PDB" id="6FKW"/>
    </source>
</evidence>
<gene>
    <name evidence="4 5" type="primary">xoxF</name>
    <name evidence="9" type="synonym">mxaF</name>
    <name evidence="9" type="ORF">MFUM_190005</name>
</gene>
<reference key="1">
    <citation type="journal article" date="2012" name="J. Bacteriol.">
        <title>Draft Genome Sequence of the Volcano-Inhabiting Thermoacidophilic Methanotroph Methylacidiphilum fumariolicum Strain SolV.</title>
        <authorList>
            <person name="Khadem A.F."/>
            <person name="Wieczorek A.S."/>
            <person name="Pol A."/>
            <person name="Vuilleumier S."/>
            <person name="Harhangi H.R."/>
            <person name="Dunfield P.F."/>
            <person name="Kalyuzhnaya M.G."/>
            <person name="Murrell J.C."/>
            <person name="Francoijs K.-J."/>
            <person name="Stunnenberg H.G."/>
            <person name="Stein L.Y."/>
            <person name="DiSpirito A.A."/>
            <person name="Semrau J.D."/>
            <person name="Lajus A."/>
            <person name="Medigue C."/>
            <person name="Klotz M.G."/>
            <person name="Jetten M.S.M."/>
            <person name="Op den Camp H.J.M."/>
        </authorList>
    </citation>
    <scope>NUCLEOTIDE SEQUENCE [LARGE SCALE GENOMIC DNA]</scope>
    <source>
        <strain>SolV</strain>
    </source>
</reference>
<reference evidence="11" key="2">
    <citation type="journal article" date="2014" name="Environ. Microbiol.">
        <title>Rare earth metals are essential for methanotrophic life in volcanic mudpots.</title>
        <authorList>
            <person name="Pol A."/>
            <person name="Barends T.R."/>
            <person name="Dietl A."/>
            <person name="Khadem A.F."/>
            <person name="Eygensteyn J."/>
            <person name="Jetten M.S."/>
            <person name="Op den Camp H.J."/>
        </authorList>
    </citation>
    <scope>X-RAY CRYSTALLOGRAPHY (1.60 ANGSTROMS) OF 35-611 IN COMPLEX WITH CE(3+) AND PQQ</scope>
    <scope>FUNCTION</scope>
    <scope>CATALYTIC ACTIVITY</scope>
    <scope>COFACTOR</scope>
    <scope>BIOPHYSICOCHEMICAL PROPERTIES</scope>
    <scope>SUBSTRATE SPECIFICITY</scope>
    <scope>IDENTIFICATION BY MASS SPECTROMETRY</scope>
    <scope>MASS SPECTROMETRY</scope>
    <scope>SUBUNIT</scope>
    <scope>DISULFIDE BONDS</scope>
    <source>
        <strain>SolV</strain>
    </source>
</reference>
<reference evidence="12" key="3">
    <citation type="journal article" date="2018" name="ChemBioChem">
        <title>Similar but Not the Same: First Kinetic and Structural Analyses of a Methanol Dehydrogenase Containing a Europium Ion in the Active Site.</title>
        <authorList>
            <person name="Jahn B."/>
            <person name="Pol A."/>
            <person name="Lumpe H."/>
            <person name="Barends T."/>
            <person name="Dietl A."/>
            <person name="Hogendoorn C."/>
            <person name="Op den Camp H."/>
            <person name="Daumann L."/>
        </authorList>
    </citation>
    <scope>X-RAY CRYSTALLOGRAPHY (1.40 ANGSTROMS) OF 35-611 IN COMPLEX WITH EU(3+) AND PQQ</scope>
    <scope>CATALYTIC ACTIVITY</scope>
    <scope>BIOPHYSICOCHEMICAL PROPERTIES</scope>
    <scope>COFACTOR</scope>
    <scope>DISULFIDE BONDS</scope>
</reference>